<dbReference type="EMBL" id="M74895">
    <property type="protein sequence ID" value="AAA47798.1"/>
    <property type="status" value="ALT_INIT"/>
    <property type="molecule type" value="Genomic_DNA"/>
</dbReference>
<dbReference type="RefSeq" id="YP_001956723.2">
    <property type="nucleotide sequence ID" value="NC_010820.1"/>
</dbReference>
<dbReference type="SMR" id="P27399"/>
<dbReference type="GlyCosmos" id="P27399">
    <property type="glycosylation" value="14 sites, No reported glycans"/>
</dbReference>
<dbReference type="GeneID" id="6386653"/>
<dbReference type="KEGG" id="vg:6386653"/>
<dbReference type="Proteomes" id="UP000007217">
    <property type="component" value="Segment"/>
</dbReference>
<dbReference type="GO" id="GO:0044167">
    <property type="term" value="C:host cell endoplasmic reticulum membrane"/>
    <property type="evidence" value="ECO:0007669"/>
    <property type="project" value="UniProtKB-SubCell"/>
</dbReference>
<dbReference type="GO" id="GO:0016020">
    <property type="term" value="C:membrane"/>
    <property type="evidence" value="ECO:0007669"/>
    <property type="project" value="UniProtKB-KW"/>
</dbReference>
<dbReference type="GO" id="GO:0019031">
    <property type="term" value="C:viral envelope"/>
    <property type="evidence" value="ECO:0007669"/>
    <property type="project" value="UniProtKB-KW"/>
</dbReference>
<dbReference type="GO" id="GO:0055036">
    <property type="term" value="C:virion membrane"/>
    <property type="evidence" value="ECO:0007669"/>
    <property type="project" value="UniProtKB-SubCell"/>
</dbReference>
<dbReference type="InterPro" id="IPR005070">
    <property type="entry name" value="Foamy_env"/>
</dbReference>
<dbReference type="Pfam" id="PF03408">
    <property type="entry name" value="Foamy_virus_ENV"/>
    <property type="match status" value="1"/>
</dbReference>
<evidence type="ECO:0000250" key="1"/>
<evidence type="ECO:0000255" key="2"/>
<evidence type="ECO:0000305" key="3"/>
<sequence length="982" mass="113314">MAPPMNLQQWLLWKKMNETHLALENISSLTEEQKQQVIIEIQQEEVIPTRMDRVKYLAYACCATSTRVMCWLFLICVLLIIVFVSCFVTVARIQWNRDINVFGPVIDWNVTHQATYQQLKAARLTRSLKVEHPHISYISINMSSIPQGVMYTPHPEPIILKERVLGISQVLMINSENIANVANLSQETKVLLTDMINEELQDLSNQMIDFELPLGDPRDQDQYIHHKCYQEFAHCYLVKYKKPSPWISEGIIVDQCPLPRIHDPNYYKYQPIWDYYLKIQNIRPQGWTSKSYYGTARMGSFYIPTFLRNNTVSHVLFCSDQLYGKWYNIENNIQENEQLLKTKLYNLTTYSKLKARALPKEWNNQGNARLFRSFNPLDVCNRPEAVLLLNTTYFTYSLWEGDCNYTTALIQNLTECRQPDRLKLKHPYACRFWRYKEGQEEVKCLGNEKKKCLYYSEYSSPEAQFDFGFLSYLNAFPGLKYIENQTVREPEYEVYSLYMECMNSAEKYGIDSVLFALKTFLNFTGTPVNEMSTARAFVGLTDPKFPPTYPNITKEQKRCNNLKRRKRSTNIEKLRSMGYSLTGAVQTLSQISDINDERLQQGVSLLRDHVVTLMEAALHDITIMEGMLAIQHVHTHLNHLKTILLMRKIDWTFIKSNWIKEQLQKTEDEMKIIRRTAKSLVYYVTQTSSSTTATSWEIGIYYEITIPKHIYLNNWQVINIGHLVESAGHLTLIRVKHPYEVINKECTYEQYLHLEDCISQDYVICDTVQIVSPCGNSTTTSDCPVTAEKVKEPYVQVSALKNGSYLVLTSRTDCSIPAYVPSIVTVNETVKCFGVEFHKPLYSESKVSFEPQVPHLKLRLPHLVGIIANLQNLEIEVTSTQESIKDQIERAKSQLLRLDIHEGDFPAWIQQLASATRDVWPAAARALQGIGNVLSNTAQGIFGTTVSILSYAKPILIGIGVILLIAFLFKIVSWLPGKKKRN</sequence>
<keyword id="KW-0165">Cleavage on pair of basic residues</keyword>
<keyword id="KW-0325">Glycoprotein</keyword>
<keyword id="KW-1038">Host endoplasmic reticulum</keyword>
<keyword id="KW-1043">Host membrane</keyword>
<keyword id="KW-1017">Isopeptide bond</keyword>
<keyword id="KW-0472">Membrane</keyword>
<keyword id="KW-1185">Reference proteome</keyword>
<keyword id="KW-0735">Signal-anchor</keyword>
<keyword id="KW-0812">Transmembrane</keyword>
<keyword id="KW-1133">Transmembrane helix</keyword>
<keyword id="KW-0832">Ubl conjugation</keyword>
<keyword id="KW-0261">Viral envelope protein</keyword>
<keyword id="KW-0946">Virion</keyword>
<reference key="1">
    <citation type="journal article" date="1992" name="Virology">
        <title>Genomic organization and expression of simian foamy virus type 3 (SFV-3).</title>
        <authorList>
            <person name="Renne R."/>
            <person name="Friedl E."/>
            <person name="Schweizer M."/>
            <person name="Fleps U."/>
            <person name="Turek R."/>
            <person name="Neumann-Haefelin D."/>
        </authorList>
    </citation>
    <scope>NUCLEOTIDE SEQUENCE [GENOMIC DNA]</scope>
</reference>
<organism>
    <name type="scientific">Simian foamy virus type 3 (strain LK3)</name>
    <name type="common">SFVagm</name>
    <name type="synonym">SFV-3</name>
    <dbReference type="NCBI Taxonomy" id="11644"/>
    <lineage>
        <taxon>Viruses</taxon>
        <taxon>Riboviria</taxon>
        <taxon>Pararnavirae</taxon>
        <taxon>Artverviricota</taxon>
        <taxon>Revtraviricetes</taxon>
        <taxon>Ortervirales</taxon>
        <taxon>Retroviridae</taxon>
        <taxon>Spumaretrovirinae</taxon>
        <taxon>Spumavirus</taxon>
        <taxon>African green monkey simian foamy virus</taxon>
    </lineage>
</organism>
<protein>
    <recommendedName>
        <fullName>Envelope glycoprotein gp130</fullName>
    </recommendedName>
    <alternativeName>
        <fullName>Env polyprotein</fullName>
    </alternativeName>
    <component>
        <recommendedName>
            <fullName>Leader peptide</fullName>
            <shortName>LP</shortName>
        </recommendedName>
        <alternativeName>
            <fullName>Env leader protein</fullName>
            <shortName>Elp</shortName>
        </alternativeName>
        <alternativeName>
            <fullName>gp18LP</fullName>
        </alternativeName>
    </component>
    <component>
        <recommendedName>
            <fullName>Surface protein</fullName>
            <shortName>SU</shortName>
        </recommendedName>
        <alternativeName>
            <fullName>Glycoprotein 80</fullName>
            <shortName>gp80</shortName>
        </alternativeName>
    </component>
    <component>
        <recommendedName>
            <fullName>Transmembrane protein</fullName>
            <shortName>TM</shortName>
        </recommendedName>
        <alternativeName>
            <fullName>Glycoprotein 48</fullName>
            <shortName>gp48</shortName>
        </alternativeName>
    </component>
</protein>
<name>ENV_SFV3L</name>
<feature type="chain" id="PRO_0000125470" description="Envelope glycoprotein gp130">
    <location>
        <begin position="1"/>
        <end position="982"/>
    </location>
</feature>
<feature type="chain" id="PRO_0000245434" description="Leader peptide" evidence="1">
    <location>
        <begin position="1"/>
        <end position="126"/>
    </location>
</feature>
<feature type="chain" id="PRO_0000245435" description="Surface protein" evidence="1">
    <location>
        <begin position="127"/>
        <end position="566"/>
    </location>
</feature>
<feature type="chain" id="PRO_0000245436" description="Transmembrane protein" evidence="1">
    <location>
        <begin position="567"/>
        <end position="982"/>
    </location>
</feature>
<feature type="topological domain" description="Cytoplasmic" evidence="2">
    <location>
        <begin position="1"/>
        <end position="65"/>
    </location>
</feature>
<feature type="transmembrane region" description="Helical; Signal-anchor for type III membrane protein" evidence="2">
    <location>
        <begin position="66"/>
        <end position="88"/>
    </location>
</feature>
<feature type="topological domain" description="Lumenal" evidence="2">
    <location>
        <begin position="89"/>
        <end position="954"/>
    </location>
</feature>
<feature type="transmembrane region" description="Helical" evidence="2">
    <location>
        <begin position="955"/>
        <end position="975"/>
    </location>
</feature>
<feature type="topological domain" description="Cytoplasmic" evidence="2">
    <location>
        <begin position="976"/>
        <end position="982"/>
    </location>
</feature>
<feature type="region of interest" description="Involved in virion budding" evidence="2">
    <location>
        <begin position="1"/>
        <end position="15"/>
    </location>
</feature>
<feature type="region of interest" description="Fusion peptide" evidence="1">
    <location>
        <begin position="570"/>
        <end position="592"/>
    </location>
</feature>
<feature type="short sequence motif" description="Endoplasmic reticulum retention signal" evidence="1">
    <location>
        <begin position="978"/>
        <end position="980"/>
    </location>
</feature>
<feature type="site" description="Cleavage; by host" evidence="1">
    <location>
        <begin position="126"/>
        <end position="127"/>
    </location>
</feature>
<feature type="site" description="Cleavage; by host">
    <location>
        <begin position="566"/>
        <end position="567"/>
    </location>
</feature>
<feature type="glycosylation site" description="N-linked (GlcNAc...) asparagine; by host" evidence="2">
    <location>
        <position position="109"/>
    </location>
</feature>
<feature type="glycosylation site" description="N-linked (GlcNAc...) asparagine; by host" evidence="2">
    <location>
        <position position="141"/>
    </location>
</feature>
<feature type="glycosylation site" description="N-linked (GlcNAc...) asparagine; by host" evidence="2">
    <location>
        <position position="183"/>
    </location>
</feature>
<feature type="glycosylation site" description="N-linked (GlcNAc...) asparagine; by host" evidence="2">
    <location>
        <position position="309"/>
    </location>
</feature>
<feature type="glycosylation site" description="N-linked (GlcNAc...) asparagine; by host" evidence="2">
    <location>
        <position position="346"/>
    </location>
</feature>
<feature type="glycosylation site" description="N-linked (GlcNAc...) asparagine; by host" evidence="2">
    <location>
        <position position="390"/>
    </location>
</feature>
<feature type="glycosylation site" description="N-linked (GlcNAc...) asparagine; by host" evidence="2">
    <location>
        <position position="404"/>
    </location>
</feature>
<feature type="glycosylation site" description="N-linked (GlcNAc...) asparagine; by host" evidence="2">
    <location>
        <position position="412"/>
    </location>
</feature>
<feature type="glycosylation site" description="N-linked (GlcNAc...) asparagine; by host" evidence="2">
    <location>
        <position position="484"/>
    </location>
</feature>
<feature type="glycosylation site" description="N-linked (GlcNAc...) asparagine; by host" evidence="2">
    <location>
        <position position="522"/>
    </location>
</feature>
<feature type="glycosylation site" description="N-linked (GlcNAc...) asparagine; by host" evidence="2">
    <location>
        <position position="551"/>
    </location>
</feature>
<feature type="glycosylation site" description="N-linked (GlcNAc...) asparagine; by host" evidence="2">
    <location>
        <position position="776"/>
    </location>
</feature>
<feature type="glycosylation site" description="N-linked (GlcNAc...) asparagine; by host" evidence="2">
    <location>
        <position position="802"/>
    </location>
</feature>
<feature type="glycosylation site" description="N-linked (GlcNAc...) asparagine; by host" evidence="2">
    <location>
        <position position="827"/>
    </location>
</feature>
<feature type="cross-link" description="Glycyl lysine isopeptide (Lys-Gly) (interchain with G-Cter in ubiquitin)" evidence="1">
    <location>
        <position position="14"/>
    </location>
</feature>
<feature type="cross-link" description="Glycyl lysine isopeptide (Lys-Gly) (interchain with G-Cter in ubiquitin)" evidence="1">
    <location>
        <position position="15"/>
    </location>
</feature>
<feature type="cross-link" description="Glycyl lysine isopeptide (Lys-Gly) (interchain with G-Cter in ubiquitin)" evidence="1">
    <location>
        <position position="34"/>
    </location>
</feature>
<gene>
    <name type="primary">env</name>
</gene>
<comment type="function">
    <text evidence="1">The surface protein (SU) attaches the virus to the host cell by binding to the cell receptor. This interaction triggers the refolding of TM and is thought to activate its fusogenic potential by unmasking its fusion peptide (By similarity).</text>
</comment>
<comment type="function">
    <text evidence="1">The transmembrane protein (TM) acts as a class I viral fusion protein. Under the current model, the protein has at least 3 conformational states: pre-fusion native state, pre-hairpin intermediate state, and post-fusion hairpin state. During viral and target cell membrane fusion, the coiled coil regions (heptad repeats) assume a trimer-of-hairpins structure, positioning the fusion peptide in close proximity to the C-terminal region of the ectodomain. The formation of this structure appears to drive apposition and subsequent fusion of viral and target cell membranes. Membranes fusion leads to delivery of the nucleocapsid into the cytoplasm (By similarity).</text>
</comment>
<comment type="function">
    <text evidence="1">The leader peptide is a component of released, infectious virions and is required for particle budding.</text>
</comment>
<comment type="subunit">
    <text evidence="1">The mature envelope protein consists of a trimer of SU-TM heterodimers. The N-terminus of leader peptide specifically interacts with Gag protein. This specific interaction between Gag protein and Env glycoprotein may allow particle egress (By similarity).</text>
</comment>
<comment type="subcellular location">
    <molecule>Envelope glycoprotein gp130</molecule>
    <subcellularLocation>
        <location>Host endoplasmic reticulum membrane</location>
    </subcellularLocation>
    <text evidence="1">The polyprotein has a highly unusual biosynthesis for a retroviral glycoprotein. It is translated as a full-length precursor protein into the rough endoplasmic reticulum and initially has a type III protein configuration with both its N and C-termini located intracytoplasmically (By similarity).</text>
</comment>
<comment type="subcellular location">
    <molecule>Leader peptide</molecule>
    <subcellularLocation>
        <location evidence="1">Virion membrane</location>
        <topology evidence="1">Single-pass type II membrane protein</topology>
    </subcellularLocation>
    <subcellularLocation>
        <location evidence="1">Host endoplasmic reticulum membrane</location>
        <topology evidence="1">Single-pass type II membrane protein</topology>
    </subcellularLocation>
    <text evidence="1">Its N-terminus is located inside the viral particle.</text>
</comment>
<comment type="subcellular location">
    <molecule>Transmembrane protein</molecule>
    <subcellularLocation>
        <location evidence="1">Virion membrane</location>
        <topology evidence="1">Single-pass type I membrane protein</topology>
    </subcellularLocation>
    <subcellularLocation>
        <location evidence="1">Host endoplasmic reticulum membrane</location>
        <topology evidence="1">Single-pass type I membrane protein</topology>
    </subcellularLocation>
</comment>
<comment type="subcellular location">
    <molecule>Surface protein</molecule>
    <subcellularLocation>
        <location evidence="1">Virion membrane</location>
        <topology evidence="1">Peripheral membrane protein</topology>
    </subcellularLocation>
    <subcellularLocation>
        <location evidence="1">Host endoplasmic reticulum membrane</location>
        <topology evidence="1">Peripheral membrane protein</topology>
    </subcellularLocation>
    <text evidence="1">The surface protein is not anchored to the viral envelope, but associates with the extravirion surface through its binding to TM.</text>
</comment>
<comment type="domain">
    <text evidence="1">The ER retention signal plays an important role in establishing the intracellular site of budding.</text>
</comment>
<comment type="PTM">
    <text evidence="1">Envelope glycoproteins are synthesized as an inactive precursor that is processed by host furin or a furin-like protease to yield a functional hetero-oligomeric complex.</text>
</comment>
<comment type="PTM">
    <text evidence="1">The transmembrane protein and the surface protein are N-glycosylated.</text>
</comment>
<comment type="PTM">
    <text evidence="1">Mono- and polyubiquitinated leader peptide are found in viral particles. Ubiquitination may be involved in regulating the balance between viral and subviral particles release (By similarity).</text>
</comment>
<comment type="miscellaneous">
    <text>Foamy viruses are distinct from other retroviruses in many respects. Their protease is active as an uncleaved Pro-Pol protein. Mature particles do not include the usual processed retroviral structural protein (MA, CA and NC), but instead contain two large Gag proteins. Their functional nucleic acid appears to be either RNA or dsDNA (up to 20% of extracellular particles), because they probably proceed either to an early (before integration) or late reverse transcription (after assembly). Foamy viruses have the ability to retrotranspose intracellularly with high efficiency. They bud predominantly into the endoplasmic reticulum (ER) and occasionally at the plasma membrane. Budding requires the presence of Env proteins. Most viral particles probably remain within the infected cell.</text>
</comment>
<comment type="sequence caution" evidence="3">
    <conflict type="erroneous initiation">
        <sequence resource="EMBL-CDS" id="AAA47798"/>
    </conflict>
</comment>
<proteinExistence type="inferred from homology"/>
<organismHost>
    <name type="scientific">Chlorocebus aethiops</name>
    <name type="common">Green monkey</name>
    <name type="synonym">Cercopithecus aethiops</name>
    <dbReference type="NCBI Taxonomy" id="9534"/>
</organismHost>
<organismHost>
    <name type="scientific">Homo sapiens</name>
    <name type="common">Human</name>
    <dbReference type="NCBI Taxonomy" id="9606"/>
</organismHost>
<accession>P27399</accession>